<name>MIAA2_HAHCH</name>
<evidence type="ECO:0000255" key="1">
    <source>
        <dbReference type="HAMAP-Rule" id="MF_00185"/>
    </source>
</evidence>
<protein>
    <recommendedName>
        <fullName evidence="1">tRNA dimethylallyltransferase 2</fullName>
        <ecNumber evidence="1">2.5.1.75</ecNumber>
    </recommendedName>
    <alternativeName>
        <fullName evidence="1">Dimethylallyl diphosphate:tRNA dimethylallyltransferase 2</fullName>
        <shortName evidence="1">DMAPP:tRNA dimethylallyltransferase 2</shortName>
        <shortName evidence="1">DMATase 2</shortName>
    </alternativeName>
    <alternativeName>
        <fullName evidence="1">Isopentenyl-diphosphate:tRNA isopentenyltransferase 2</fullName>
        <shortName evidence="1">IPP transferase 2</shortName>
        <shortName evidence="1">IPPT 2</shortName>
        <shortName evidence="1">IPTase 2</shortName>
    </alternativeName>
</protein>
<sequence>MSDNKALPPAILLMGPTASGKTDLAMALSERLPCDLISVDSVMVYRGMDIGSAKPDPDTLTRYPHHLIDIRDPAEPYSAAEFRTDALRLMEQSVNAGRIPLLVGGTIMYYKALCQGLGDMPSADENVRGQILAEAEQVGWPALHEQLRQVDPVAAAKIHPNNRQRIQRALEVYRLTGKPLSHYWAADGANPENELNWDSVNGAALPYNALNLALAPVKREDLHARIAKRFQIMLEQGMIDEVEQLRRRGDLNVELPSIRAVGYRQVWSYLEGEFGREEMVEKATAATRQLAKRQMTWLRSWPEINWLSADDTQLVEAAMRLISQRLQSCNPL</sequence>
<accession>Q2SBC1</accession>
<comment type="function">
    <text evidence="1">Catalyzes the transfer of a dimethylallyl group onto the adenine at position 37 in tRNAs that read codons beginning with uridine, leading to the formation of N6-(dimethylallyl)adenosine (i(6)A).</text>
</comment>
<comment type="catalytic activity">
    <reaction evidence="1">
        <text>adenosine(37) in tRNA + dimethylallyl diphosphate = N(6)-dimethylallyladenosine(37) in tRNA + diphosphate</text>
        <dbReference type="Rhea" id="RHEA:26482"/>
        <dbReference type="Rhea" id="RHEA-COMP:10162"/>
        <dbReference type="Rhea" id="RHEA-COMP:10375"/>
        <dbReference type="ChEBI" id="CHEBI:33019"/>
        <dbReference type="ChEBI" id="CHEBI:57623"/>
        <dbReference type="ChEBI" id="CHEBI:74411"/>
        <dbReference type="ChEBI" id="CHEBI:74415"/>
        <dbReference type="EC" id="2.5.1.75"/>
    </reaction>
</comment>
<comment type="cofactor">
    <cofactor evidence="1">
        <name>Mg(2+)</name>
        <dbReference type="ChEBI" id="CHEBI:18420"/>
    </cofactor>
</comment>
<comment type="subunit">
    <text evidence="1">Monomer.</text>
</comment>
<comment type="similarity">
    <text evidence="1">Belongs to the IPP transferase family.</text>
</comment>
<dbReference type="EC" id="2.5.1.75" evidence="1"/>
<dbReference type="EMBL" id="CP000155">
    <property type="protein sequence ID" value="ABC32053.1"/>
    <property type="molecule type" value="Genomic_DNA"/>
</dbReference>
<dbReference type="RefSeq" id="WP_011399117.1">
    <property type="nucleotide sequence ID" value="NC_007645.1"/>
</dbReference>
<dbReference type="SMR" id="Q2SBC1"/>
<dbReference type="STRING" id="349521.HCH_05384"/>
<dbReference type="KEGG" id="hch:HCH_05384"/>
<dbReference type="eggNOG" id="COG0324">
    <property type="taxonomic scope" value="Bacteria"/>
</dbReference>
<dbReference type="HOGENOM" id="CLU_032616_0_0_6"/>
<dbReference type="OrthoDB" id="9776390at2"/>
<dbReference type="Proteomes" id="UP000000238">
    <property type="component" value="Chromosome"/>
</dbReference>
<dbReference type="GO" id="GO:0005524">
    <property type="term" value="F:ATP binding"/>
    <property type="evidence" value="ECO:0007669"/>
    <property type="project" value="UniProtKB-UniRule"/>
</dbReference>
<dbReference type="GO" id="GO:0052381">
    <property type="term" value="F:tRNA dimethylallyltransferase activity"/>
    <property type="evidence" value="ECO:0007669"/>
    <property type="project" value="UniProtKB-UniRule"/>
</dbReference>
<dbReference type="GO" id="GO:0006400">
    <property type="term" value="P:tRNA modification"/>
    <property type="evidence" value="ECO:0007669"/>
    <property type="project" value="TreeGrafter"/>
</dbReference>
<dbReference type="FunFam" id="1.10.20.140:FF:000001">
    <property type="entry name" value="tRNA dimethylallyltransferase"/>
    <property type="match status" value="1"/>
</dbReference>
<dbReference type="Gene3D" id="1.10.20.140">
    <property type="match status" value="1"/>
</dbReference>
<dbReference type="Gene3D" id="3.40.50.300">
    <property type="entry name" value="P-loop containing nucleotide triphosphate hydrolases"/>
    <property type="match status" value="1"/>
</dbReference>
<dbReference type="HAMAP" id="MF_00185">
    <property type="entry name" value="IPP_trans"/>
    <property type="match status" value="1"/>
</dbReference>
<dbReference type="InterPro" id="IPR039657">
    <property type="entry name" value="Dimethylallyltransferase"/>
</dbReference>
<dbReference type="InterPro" id="IPR018022">
    <property type="entry name" value="IPT"/>
</dbReference>
<dbReference type="InterPro" id="IPR027417">
    <property type="entry name" value="P-loop_NTPase"/>
</dbReference>
<dbReference type="NCBIfam" id="TIGR00174">
    <property type="entry name" value="miaA"/>
    <property type="match status" value="1"/>
</dbReference>
<dbReference type="PANTHER" id="PTHR11088">
    <property type="entry name" value="TRNA DIMETHYLALLYLTRANSFERASE"/>
    <property type="match status" value="1"/>
</dbReference>
<dbReference type="PANTHER" id="PTHR11088:SF60">
    <property type="entry name" value="TRNA DIMETHYLALLYLTRANSFERASE"/>
    <property type="match status" value="1"/>
</dbReference>
<dbReference type="Pfam" id="PF01715">
    <property type="entry name" value="IPPT"/>
    <property type="match status" value="1"/>
</dbReference>
<dbReference type="SUPFAM" id="SSF52540">
    <property type="entry name" value="P-loop containing nucleoside triphosphate hydrolases"/>
    <property type="match status" value="1"/>
</dbReference>
<keyword id="KW-0067">ATP-binding</keyword>
<keyword id="KW-0460">Magnesium</keyword>
<keyword id="KW-0547">Nucleotide-binding</keyword>
<keyword id="KW-1185">Reference proteome</keyword>
<keyword id="KW-0808">Transferase</keyword>
<keyword id="KW-0819">tRNA processing</keyword>
<proteinExistence type="inferred from homology"/>
<feature type="chain" id="PRO_0000377180" description="tRNA dimethylallyltransferase 2">
    <location>
        <begin position="1"/>
        <end position="332"/>
    </location>
</feature>
<feature type="region of interest" description="Interaction with substrate tRNA" evidence="1">
    <location>
        <begin position="40"/>
        <end position="43"/>
    </location>
</feature>
<feature type="region of interest" description="Interaction with substrate tRNA" evidence="1">
    <location>
        <begin position="164"/>
        <end position="168"/>
    </location>
</feature>
<feature type="binding site" evidence="1">
    <location>
        <begin position="15"/>
        <end position="22"/>
    </location>
    <ligand>
        <name>ATP</name>
        <dbReference type="ChEBI" id="CHEBI:30616"/>
    </ligand>
</feature>
<feature type="binding site" evidence="1">
    <location>
        <begin position="17"/>
        <end position="22"/>
    </location>
    <ligand>
        <name>substrate</name>
    </ligand>
</feature>
<feature type="site" description="Interaction with substrate tRNA" evidence="1">
    <location>
        <position position="106"/>
    </location>
</feature>
<feature type="site" description="Interaction with substrate tRNA" evidence="1">
    <location>
        <position position="128"/>
    </location>
</feature>
<gene>
    <name evidence="1" type="primary">miaA2</name>
    <name type="ordered locus">HCH_05384</name>
</gene>
<organism>
    <name type="scientific">Hahella chejuensis (strain KCTC 2396)</name>
    <dbReference type="NCBI Taxonomy" id="349521"/>
    <lineage>
        <taxon>Bacteria</taxon>
        <taxon>Pseudomonadati</taxon>
        <taxon>Pseudomonadota</taxon>
        <taxon>Gammaproteobacteria</taxon>
        <taxon>Oceanospirillales</taxon>
        <taxon>Hahellaceae</taxon>
        <taxon>Hahella</taxon>
    </lineage>
</organism>
<reference key="1">
    <citation type="journal article" date="2005" name="Nucleic Acids Res.">
        <title>Genomic blueprint of Hahella chejuensis, a marine microbe producing an algicidal agent.</title>
        <authorList>
            <person name="Jeong H."/>
            <person name="Yim J.H."/>
            <person name="Lee C."/>
            <person name="Choi S.-H."/>
            <person name="Park Y.K."/>
            <person name="Yoon S.H."/>
            <person name="Hur C.-G."/>
            <person name="Kang H.-Y."/>
            <person name="Kim D."/>
            <person name="Lee H.H."/>
            <person name="Park K.H."/>
            <person name="Park S.-H."/>
            <person name="Park H.-S."/>
            <person name="Lee H.K."/>
            <person name="Oh T.K."/>
            <person name="Kim J.F."/>
        </authorList>
    </citation>
    <scope>NUCLEOTIDE SEQUENCE [LARGE SCALE GENOMIC DNA]</scope>
    <source>
        <strain>KCTC 2396</strain>
    </source>
</reference>